<dbReference type="EC" id="3.1.1.61" evidence="1"/>
<dbReference type="EC" id="3.5.1.44" evidence="1"/>
<dbReference type="EMBL" id="AJ488585">
    <property type="protein sequence ID" value="CAD32756.1"/>
    <property type="molecule type" value="Genomic_DNA"/>
</dbReference>
<dbReference type="SMR" id="Q8KLS5"/>
<dbReference type="DIP" id="DIP-48636N"/>
<dbReference type="IntAct" id="Q8KLS5">
    <property type="interactions" value="1"/>
</dbReference>
<dbReference type="GO" id="GO:0005737">
    <property type="term" value="C:cytoplasm"/>
    <property type="evidence" value="ECO:0007669"/>
    <property type="project" value="UniProtKB-SubCell"/>
</dbReference>
<dbReference type="GO" id="GO:0000156">
    <property type="term" value="F:phosphorelay response regulator activity"/>
    <property type="evidence" value="ECO:0007669"/>
    <property type="project" value="InterPro"/>
</dbReference>
<dbReference type="GO" id="GO:0008984">
    <property type="term" value="F:protein-glutamate methylesterase activity"/>
    <property type="evidence" value="ECO:0007669"/>
    <property type="project" value="UniProtKB-UniRule"/>
</dbReference>
<dbReference type="GO" id="GO:0050568">
    <property type="term" value="F:protein-glutamine glutaminase activity"/>
    <property type="evidence" value="ECO:0007669"/>
    <property type="project" value="UniProtKB-UniRule"/>
</dbReference>
<dbReference type="GO" id="GO:0006935">
    <property type="term" value="P:chemotaxis"/>
    <property type="evidence" value="ECO:0007669"/>
    <property type="project" value="UniProtKB-UniRule"/>
</dbReference>
<dbReference type="CDD" id="cd16432">
    <property type="entry name" value="CheB_Rec"/>
    <property type="match status" value="1"/>
</dbReference>
<dbReference type="CDD" id="cd17541">
    <property type="entry name" value="REC_CheB-like"/>
    <property type="match status" value="1"/>
</dbReference>
<dbReference type="Gene3D" id="3.40.50.2300">
    <property type="match status" value="1"/>
</dbReference>
<dbReference type="Gene3D" id="3.40.50.180">
    <property type="entry name" value="Methylesterase CheB, C-terminal domain"/>
    <property type="match status" value="1"/>
</dbReference>
<dbReference type="HAMAP" id="MF_00099">
    <property type="entry name" value="CheB_chemtxs"/>
    <property type="match status" value="1"/>
</dbReference>
<dbReference type="InterPro" id="IPR008248">
    <property type="entry name" value="CheB-like"/>
</dbReference>
<dbReference type="InterPro" id="IPR035909">
    <property type="entry name" value="CheB_C"/>
</dbReference>
<dbReference type="InterPro" id="IPR011006">
    <property type="entry name" value="CheY-like_superfamily"/>
</dbReference>
<dbReference type="InterPro" id="IPR000673">
    <property type="entry name" value="Sig_transdc_resp-reg_Me-estase"/>
</dbReference>
<dbReference type="InterPro" id="IPR001789">
    <property type="entry name" value="Sig_transdc_resp-reg_receiver"/>
</dbReference>
<dbReference type="NCBIfam" id="NF001965">
    <property type="entry name" value="PRK00742.1"/>
    <property type="match status" value="1"/>
</dbReference>
<dbReference type="PANTHER" id="PTHR42872">
    <property type="entry name" value="PROTEIN-GLUTAMATE METHYLESTERASE/PROTEIN-GLUTAMINE GLUTAMINASE"/>
    <property type="match status" value="1"/>
</dbReference>
<dbReference type="PANTHER" id="PTHR42872:SF6">
    <property type="entry name" value="PROTEIN-GLUTAMATE METHYLESTERASE_PROTEIN-GLUTAMINE GLUTAMINASE"/>
    <property type="match status" value="1"/>
</dbReference>
<dbReference type="Pfam" id="PF01339">
    <property type="entry name" value="CheB_methylest"/>
    <property type="match status" value="1"/>
</dbReference>
<dbReference type="Pfam" id="PF00072">
    <property type="entry name" value="Response_reg"/>
    <property type="match status" value="1"/>
</dbReference>
<dbReference type="PIRSF" id="PIRSF000876">
    <property type="entry name" value="RR_chemtxs_CheB"/>
    <property type="match status" value="1"/>
</dbReference>
<dbReference type="SMART" id="SM00448">
    <property type="entry name" value="REC"/>
    <property type="match status" value="1"/>
</dbReference>
<dbReference type="SUPFAM" id="SSF52172">
    <property type="entry name" value="CheY-like"/>
    <property type="match status" value="1"/>
</dbReference>
<dbReference type="SUPFAM" id="SSF52738">
    <property type="entry name" value="Methylesterase CheB, C-terminal domain"/>
    <property type="match status" value="1"/>
</dbReference>
<dbReference type="PROSITE" id="PS50122">
    <property type="entry name" value="CHEB"/>
    <property type="match status" value="1"/>
</dbReference>
<dbReference type="PROSITE" id="PS50110">
    <property type="entry name" value="RESPONSE_REGULATORY"/>
    <property type="match status" value="1"/>
</dbReference>
<reference key="1">
    <citation type="journal article" date="2002" name="Mol. Microbiol.">
        <title>The third chemotaxis locus of Rhodobacter sphaeroides is essential for chemotaxis.</title>
        <authorList>
            <person name="Porter S.L."/>
            <person name="Warren A.V."/>
            <person name="Martin A.C."/>
            <person name="Armitage J.P."/>
        </authorList>
    </citation>
    <scope>NUCLEOTIDE SEQUENCE [GENOMIC DNA]</scope>
    <scope>CHARACTERIZATION</scope>
    <source>
        <strain>WS8N</strain>
    </source>
</reference>
<proteinExistence type="evidence at protein level"/>
<evidence type="ECO:0000255" key="1">
    <source>
        <dbReference type="HAMAP-Rule" id="MF_00099"/>
    </source>
</evidence>
<feature type="chain" id="PRO_0000158024" description="Protein-glutamate methylesterase/protein-glutamine glutaminase of group 2 operon">
    <location>
        <begin position="1"/>
        <end position="366"/>
    </location>
</feature>
<feature type="domain" description="Response regulatory" evidence="1">
    <location>
        <begin position="19"/>
        <end position="136"/>
    </location>
</feature>
<feature type="domain" description="CheB-type methylesterase" evidence="1">
    <location>
        <begin position="162"/>
        <end position="356"/>
    </location>
</feature>
<feature type="active site" evidence="1">
    <location>
        <position position="175"/>
    </location>
</feature>
<feature type="active site" evidence="1">
    <location>
        <position position="201"/>
    </location>
</feature>
<feature type="active site" evidence="1">
    <location>
        <position position="298"/>
    </location>
</feature>
<feature type="modified residue" description="4-aspartylphosphate" evidence="1">
    <location>
        <position position="70"/>
    </location>
</feature>
<gene>
    <name evidence="1" type="primary">cheB2</name>
</gene>
<accession>Q8KLS5</accession>
<protein>
    <recommendedName>
        <fullName>Protein-glutamate methylesterase/protein-glutamine glutaminase of group 2 operon</fullName>
        <ecNumber evidence="1">3.1.1.61</ecNumber>
        <ecNumber evidence="1">3.5.1.44</ecNumber>
    </recommendedName>
</protein>
<name>CHEB2_CERSP</name>
<organism>
    <name type="scientific">Cereibacter sphaeroides</name>
    <name type="common">Rhodobacter sphaeroides</name>
    <dbReference type="NCBI Taxonomy" id="1063"/>
    <lineage>
        <taxon>Bacteria</taxon>
        <taxon>Pseudomonadati</taxon>
        <taxon>Pseudomonadota</taxon>
        <taxon>Alphaproteobacteria</taxon>
        <taxon>Rhodobacterales</taxon>
        <taxon>Paracoccaceae</taxon>
        <taxon>Cereibacter</taxon>
    </lineage>
</organism>
<sequence length="366" mass="37948">MKAAADRLMAARAREGRTRVLIVDDSAMVRQALALGLSTDPRLEVVGTASGAEAARAQMAALKPDVVTLDLEMPQMDGLTFLRSYMESAPVPTVVISSLTRTSGETAMRAMEAGAVDIISKPSLGAGQGLPAIMRDVCARVWAAARARLALPDGAAPAPVAPGASEDWIHALGASTGGVQALSRILPFFPAQSPGLLVVQHMPEGFTAAFARRLDALCRMRVREAADGDLVLPGLVLIAPGGLRHMEIERAGGVCRVRLVAGAPVSYSRPSVDRMFLSLAAAAGPRVSAALLTGMGRDGAAGLLAIRRAGGRTFAQDEGSSAVFGMPLAARDLRAAEEILTLDDIPARMMLAAAADTRAPSLASND</sequence>
<comment type="function">
    <text evidence="1">Involved in chemotaxis. Part of a chemotaxis signal transduction system that modulates chemotaxis in response to various stimuli. Catalyzes the demethylation of specific methylglutamate residues introduced into the chemoreceptors (methyl-accepting chemotaxis proteins or MCP) by CheR. Also mediates the irreversible deamidation of specific glutamine residues to glutamic acid.</text>
</comment>
<comment type="catalytic activity">
    <reaction evidence="1">
        <text>[protein]-L-glutamate 5-O-methyl ester + H2O = L-glutamyl-[protein] + methanol + H(+)</text>
        <dbReference type="Rhea" id="RHEA:23236"/>
        <dbReference type="Rhea" id="RHEA-COMP:10208"/>
        <dbReference type="Rhea" id="RHEA-COMP:10311"/>
        <dbReference type="ChEBI" id="CHEBI:15377"/>
        <dbReference type="ChEBI" id="CHEBI:15378"/>
        <dbReference type="ChEBI" id="CHEBI:17790"/>
        <dbReference type="ChEBI" id="CHEBI:29973"/>
        <dbReference type="ChEBI" id="CHEBI:82795"/>
        <dbReference type="EC" id="3.1.1.61"/>
    </reaction>
</comment>
<comment type="catalytic activity">
    <reaction evidence="1">
        <text>L-glutaminyl-[protein] + H2O = L-glutamyl-[protein] + NH4(+)</text>
        <dbReference type="Rhea" id="RHEA:16441"/>
        <dbReference type="Rhea" id="RHEA-COMP:10207"/>
        <dbReference type="Rhea" id="RHEA-COMP:10208"/>
        <dbReference type="ChEBI" id="CHEBI:15377"/>
        <dbReference type="ChEBI" id="CHEBI:28938"/>
        <dbReference type="ChEBI" id="CHEBI:29973"/>
        <dbReference type="ChEBI" id="CHEBI:30011"/>
        <dbReference type="EC" id="3.5.1.44"/>
    </reaction>
</comment>
<comment type="subcellular location">
    <subcellularLocation>
        <location evidence="1">Cytoplasm</location>
    </subcellularLocation>
</comment>
<comment type="domain">
    <text evidence="1">Contains a C-terminal catalytic domain, and an N-terminal region which modulates catalytic activity.</text>
</comment>
<comment type="PTM">
    <text evidence="1">Phosphorylated by CheA. Phosphorylation of the N-terminal regulatory domain activates the methylesterase activity.</text>
</comment>
<comment type="miscellaneous">
    <text>R.sphaeroides does not have a cheB in its group 1 operon. Part of the second chemotactic pathway (cheOp2); there are 3 operons encoding multiple homologs of the chemosensory proteins in R.sphaeroides. This protein is essential for chemotaxis, and is able to partially complement an E.coli cheB deletion mutant.</text>
</comment>
<comment type="similarity">
    <text evidence="1">Belongs to the CheB family.</text>
</comment>
<keyword id="KW-0145">Chemotaxis</keyword>
<keyword id="KW-0963">Cytoplasm</keyword>
<keyword id="KW-0378">Hydrolase</keyword>
<keyword id="KW-0597">Phosphoprotein</keyword>